<gene>
    <name evidence="1" type="primary">rppH</name>
    <name evidence="1" type="synonym">nudH</name>
    <name type="ordered locus">Sden_2782</name>
</gene>
<comment type="function">
    <text evidence="1">Accelerates the degradation of transcripts by removing pyrophosphate from the 5'-end of triphosphorylated RNA, leading to a more labile monophosphorylated state that can stimulate subsequent ribonuclease cleavage.</text>
</comment>
<comment type="cofactor">
    <cofactor evidence="1">
        <name>a divalent metal cation</name>
        <dbReference type="ChEBI" id="CHEBI:60240"/>
    </cofactor>
</comment>
<comment type="similarity">
    <text evidence="1">Belongs to the Nudix hydrolase family. RppH subfamily.</text>
</comment>
<sequence>MIDSDGFRANVGIIICNQYGQVMWARRFGQHSWQFPQGGLDDGESAEEAMYRELYEEVGLRPEQVKILTSTRSWLRYRLPKRLVRQDSKPVCIGQKQKWFLLQLNGNDNNINLNSSGHPEFDDWRWVNYWYPVRQVVSFKRDVYRKVMKEFAPTTLAFQVNDTGRKRNRPRN</sequence>
<reference key="1">
    <citation type="submission" date="2006-03" db="EMBL/GenBank/DDBJ databases">
        <title>Complete sequence of Shewanella denitrificans OS217.</title>
        <authorList>
            <consortium name="US DOE Joint Genome Institute"/>
            <person name="Copeland A."/>
            <person name="Lucas S."/>
            <person name="Lapidus A."/>
            <person name="Barry K."/>
            <person name="Detter J.C."/>
            <person name="Glavina del Rio T."/>
            <person name="Hammon N."/>
            <person name="Israni S."/>
            <person name="Dalin E."/>
            <person name="Tice H."/>
            <person name="Pitluck S."/>
            <person name="Brettin T."/>
            <person name="Bruce D."/>
            <person name="Han C."/>
            <person name="Tapia R."/>
            <person name="Gilna P."/>
            <person name="Kiss H."/>
            <person name="Schmutz J."/>
            <person name="Larimer F."/>
            <person name="Land M."/>
            <person name="Hauser L."/>
            <person name="Kyrpides N."/>
            <person name="Lykidis A."/>
            <person name="Richardson P."/>
        </authorList>
    </citation>
    <scope>NUCLEOTIDE SEQUENCE [LARGE SCALE GENOMIC DNA]</scope>
    <source>
        <strain>OS217 / ATCC BAA-1090 / DSM 15013</strain>
    </source>
</reference>
<protein>
    <recommendedName>
        <fullName evidence="1">RNA pyrophosphohydrolase</fullName>
        <ecNumber evidence="1">3.6.1.-</ecNumber>
    </recommendedName>
    <alternativeName>
        <fullName evidence="1">(Di)nucleoside polyphosphate hydrolase</fullName>
    </alternativeName>
</protein>
<proteinExistence type="inferred from homology"/>
<organism>
    <name type="scientific">Shewanella denitrificans (strain OS217 / ATCC BAA-1090 / DSM 15013)</name>
    <dbReference type="NCBI Taxonomy" id="318161"/>
    <lineage>
        <taxon>Bacteria</taxon>
        <taxon>Pseudomonadati</taxon>
        <taxon>Pseudomonadota</taxon>
        <taxon>Gammaproteobacteria</taxon>
        <taxon>Alteromonadales</taxon>
        <taxon>Shewanellaceae</taxon>
        <taxon>Shewanella</taxon>
    </lineage>
</organism>
<accession>Q12KG5</accession>
<evidence type="ECO:0000255" key="1">
    <source>
        <dbReference type="HAMAP-Rule" id="MF_00298"/>
    </source>
</evidence>
<dbReference type="EC" id="3.6.1.-" evidence="1"/>
<dbReference type="EMBL" id="CP000302">
    <property type="protein sequence ID" value="ABE56061.1"/>
    <property type="molecule type" value="Genomic_DNA"/>
</dbReference>
<dbReference type="RefSeq" id="WP_011497211.1">
    <property type="nucleotide sequence ID" value="NC_007954.1"/>
</dbReference>
<dbReference type="SMR" id="Q12KG5"/>
<dbReference type="STRING" id="318161.Sden_2782"/>
<dbReference type="KEGG" id="sdn:Sden_2782"/>
<dbReference type="eggNOG" id="COG0494">
    <property type="taxonomic scope" value="Bacteria"/>
</dbReference>
<dbReference type="HOGENOM" id="CLU_087195_3_2_6"/>
<dbReference type="OrthoDB" id="9816040at2"/>
<dbReference type="Proteomes" id="UP000001982">
    <property type="component" value="Chromosome"/>
</dbReference>
<dbReference type="GO" id="GO:0005737">
    <property type="term" value="C:cytoplasm"/>
    <property type="evidence" value="ECO:0007669"/>
    <property type="project" value="TreeGrafter"/>
</dbReference>
<dbReference type="GO" id="GO:0034353">
    <property type="term" value="F:mRNA 5'-diphosphatase activity"/>
    <property type="evidence" value="ECO:0007669"/>
    <property type="project" value="TreeGrafter"/>
</dbReference>
<dbReference type="GO" id="GO:0006402">
    <property type="term" value="P:mRNA catabolic process"/>
    <property type="evidence" value="ECO:0007669"/>
    <property type="project" value="TreeGrafter"/>
</dbReference>
<dbReference type="CDD" id="cd03671">
    <property type="entry name" value="NUDIX_Ap4A_hydrolase_plant_like"/>
    <property type="match status" value="1"/>
</dbReference>
<dbReference type="FunFam" id="3.90.79.10:FF:000001">
    <property type="entry name" value="RNA pyrophosphohydrolase"/>
    <property type="match status" value="1"/>
</dbReference>
<dbReference type="Gene3D" id="3.90.79.10">
    <property type="entry name" value="Nucleoside Triphosphate Pyrophosphohydrolase"/>
    <property type="match status" value="1"/>
</dbReference>
<dbReference type="HAMAP" id="MF_00298">
    <property type="entry name" value="Nudix_RppH"/>
    <property type="match status" value="1"/>
</dbReference>
<dbReference type="InterPro" id="IPR020476">
    <property type="entry name" value="Nudix_hydrolase"/>
</dbReference>
<dbReference type="InterPro" id="IPR015797">
    <property type="entry name" value="NUDIX_hydrolase-like_dom_sf"/>
</dbReference>
<dbReference type="InterPro" id="IPR020084">
    <property type="entry name" value="NUDIX_hydrolase_CS"/>
</dbReference>
<dbReference type="InterPro" id="IPR000086">
    <property type="entry name" value="NUDIX_hydrolase_dom"/>
</dbReference>
<dbReference type="InterPro" id="IPR022927">
    <property type="entry name" value="RppH"/>
</dbReference>
<dbReference type="NCBIfam" id="NF001934">
    <property type="entry name" value="PRK00714.1-1"/>
    <property type="match status" value="1"/>
</dbReference>
<dbReference type="NCBIfam" id="NF001937">
    <property type="entry name" value="PRK00714.1-4"/>
    <property type="match status" value="1"/>
</dbReference>
<dbReference type="NCBIfam" id="NF001938">
    <property type="entry name" value="PRK00714.1-5"/>
    <property type="match status" value="1"/>
</dbReference>
<dbReference type="PANTHER" id="PTHR23114">
    <property type="entry name" value="M7GPPPN-MRNA HYDROLASE"/>
    <property type="match status" value="1"/>
</dbReference>
<dbReference type="PANTHER" id="PTHR23114:SF17">
    <property type="entry name" value="M7GPPPN-MRNA HYDROLASE"/>
    <property type="match status" value="1"/>
</dbReference>
<dbReference type="Pfam" id="PF00293">
    <property type="entry name" value="NUDIX"/>
    <property type="match status" value="1"/>
</dbReference>
<dbReference type="PRINTS" id="PR00502">
    <property type="entry name" value="NUDIXFAMILY"/>
</dbReference>
<dbReference type="SUPFAM" id="SSF55811">
    <property type="entry name" value="Nudix"/>
    <property type="match status" value="1"/>
</dbReference>
<dbReference type="PROSITE" id="PS51462">
    <property type="entry name" value="NUDIX"/>
    <property type="match status" value="1"/>
</dbReference>
<dbReference type="PROSITE" id="PS00893">
    <property type="entry name" value="NUDIX_BOX"/>
    <property type="match status" value="1"/>
</dbReference>
<feature type="chain" id="PRO_1000021995" description="RNA pyrophosphohydrolase">
    <location>
        <begin position="1"/>
        <end position="172"/>
    </location>
</feature>
<feature type="domain" description="Nudix hydrolase" evidence="1">
    <location>
        <begin position="6"/>
        <end position="149"/>
    </location>
</feature>
<feature type="short sequence motif" description="Nudix box">
    <location>
        <begin position="38"/>
        <end position="59"/>
    </location>
</feature>
<keyword id="KW-0378">Hydrolase</keyword>
<keyword id="KW-1185">Reference proteome</keyword>
<name>RPPH_SHEDO</name>